<sequence>METTKPSFQDVLEFVRLFRRKNKLQREIQDIEKKIRDNQKRVLLLDNLSDYIKPGMSVEAIQGIIASMKSDYEDRVDDYIIKNAEISKERRDISKKLKAMGEMKHADVKAE</sequence>
<feature type="chain" id="PRO_1000131774" description="Pole-localizer protein TmaR">
    <location>
        <begin position="1"/>
        <end position="111"/>
    </location>
</feature>
<feature type="coiled-coil region" evidence="1">
    <location>
        <begin position="14"/>
        <end position="41"/>
    </location>
</feature>
<comment type="function">
    <text evidence="1">Pole-localizer protein involved in the regulation of several cellular processes.</text>
</comment>
<comment type="subcellular location">
    <subcellularLocation>
        <location evidence="1">Cytoplasm</location>
    </subcellularLocation>
    <text evidence="1">Forms clusters that localize mainly near one pole of the cell.</text>
</comment>
<comment type="similarity">
    <text evidence="1">Belongs to the pole-localizer TmaR family.</text>
</comment>
<accession>B5RBP9</accession>
<evidence type="ECO:0000255" key="1">
    <source>
        <dbReference type="HAMAP-Rule" id="MF_00683"/>
    </source>
</evidence>
<protein>
    <recommendedName>
        <fullName evidence="1">Pole-localizer protein TmaR</fullName>
    </recommendedName>
</protein>
<organism>
    <name type="scientific">Salmonella gallinarum (strain 287/91 / NCTC 13346)</name>
    <dbReference type="NCBI Taxonomy" id="550538"/>
    <lineage>
        <taxon>Bacteria</taxon>
        <taxon>Pseudomonadati</taxon>
        <taxon>Pseudomonadota</taxon>
        <taxon>Gammaproteobacteria</taxon>
        <taxon>Enterobacterales</taxon>
        <taxon>Enterobacteriaceae</taxon>
        <taxon>Salmonella</taxon>
    </lineage>
</organism>
<dbReference type="EMBL" id="AM933173">
    <property type="protein sequence ID" value="CAR37930.1"/>
    <property type="molecule type" value="Genomic_DNA"/>
</dbReference>
<dbReference type="RefSeq" id="WP_000450405.1">
    <property type="nucleotide sequence ID" value="NC_011274.1"/>
</dbReference>
<dbReference type="SMR" id="B5RBP9"/>
<dbReference type="KEGG" id="seg:SG2088"/>
<dbReference type="HOGENOM" id="CLU_153146_0_0_6"/>
<dbReference type="Proteomes" id="UP000008321">
    <property type="component" value="Chromosome"/>
</dbReference>
<dbReference type="GO" id="GO:0005829">
    <property type="term" value="C:cytosol"/>
    <property type="evidence" value="ECO:0007669"/>
    <property type="project" value="TreeGrafter"/>
</dbReference>
<dbReference type="HAMAP" id="MF_00683">
    <property type="entry name" value="Pole_loc_TmaR"/>
    <property type="match status" value="1"/>
</dbReference>
<dbReference type="InterPro" id="IPR007458">
    <property type="entry name" value="DUF496"/>
</dbReference>
<dbReference type="InterPro" id="IPR053375">
    <property type="entry name" value="UPF0265"/>
</dbReference>
<dbReference type="NCBIfam" id="NF003844">
    <property type="entry name" value="PRK05423.1"/>
    <property type="match status" value="1"/>
</dbReference>
<dbReference type="NCBIfam" id="NF040881">
    <property type="entry name" value="PTS_reg_TmaR"/>
    <property type="match status" value="1"/>
</dbReference>
<dbReference type="PANTHER" id="PTHR39591">
    <property type="entry name" value="UPF0265 PROTEIN YEEX"/>
    <property type="match status" value="1"/>
</dbReference>
<dbReference type="PANTHER" id="PTHR39591:SF1">
    <property type="entry name" value="UPF0265 PROTEIN YEEX"/>
    <property type="match status" value="1"/>
</dbReference>
<dbReference type="Pfam" id="PF04363">
    <property type="entry name" value="DUF496"/>
    <property type="match status" value="1"/>
</dbReference>
<dbReference type="PIRSF" id="PIRSF028773">
    <property type="entry name" value="UCP028773"/>
    <property type="match status" value="1"/>
</dbReference>
<reference key="1">
    <citation type="journal article" date="2008" name="Genome Res.">
        <title>Comparative genome analysis of Salmonella enteritidis PT4 and Salmonella gallinarum 287/91 provides insights into evolutionary and host adaptation pathways.</title>
        <authorList>
            <person name="Thomson N.R."/>
            <person name="Clayton D.J."/>
            <person name="Windhorst D."/>
            <person name="Vernikos G."/>
            <person name="Davidson S."/>
            <person name="Churcher C."/>
            <person name="Quail M.A."/>
            <person name="Stevens M."/>
            <person name="Jones M.A."/>
            <person name="Watson M."/>
            <person name="Barron A."/>
            <person name="Layton A."/>
            <person name="Pickard D."/>
            <person name="Kingsley R.A."/>
            <person name="Bignell A."/>
            <person name="Clark L."/>
            <person name="Harris B."/>
            <person name="Ormond D."/>
            <person name="Abdellah Z."/>
            <person name="Brooks K."/>
            <person name="Cherevach I."/>
            <person name="Chillingworth T."/>
            <person name="Woodward J."/>
            <person name="Norberczak H."/>
            <person name="Lord A."/>
            <person name="Arrowsmith C."/>
            <person name="Jagels K."/>
            <person name="Moule S."/>
            <person name="Mungall K."/>
            <person name="Saunders M."/>
            <person name="Whitehead S."/>
            <person name="Chabalgoity J.A."/>
            <person name="Maskell D."/>
            <person name="Humphreys T."/>
            <person name="Roberts M."/>
            <person name="Barrow P.A."/>
            <person name="Dougan G."/>
            <person name="Parkhill J."/>
        </authorList>
    </citation>
    <scope>NUCLEOTIDE SEQUENCE [LARGE SCALE GENOMIC DNA]</scope>
    <source>
        <strain>287/91 / NCTC 13346</strain>
    </source>
</reference>
<keyword id="KW-0175">Coiled coil</keyword>
<keyword id="KW-0963">Cytoplasm</keyword>
<gene>
    <name evidence="1" type="primary">tmaR</name>
    <name type="ordered locus">SG2088</name>
</gene>
<name>TMAR_SALG2</name>
<proteinExistence type="inferred from homology"/>